<comment type="function">
    <text>The 5S subunit specifically catalyzes the transfer of the carboxyl group from biotin of the 1.3S subunit to pyruvate to form oxaloacetate and 1.3S biotin.</text>
</comment>
<comment type="catalytic activity">
    <reaction>
        <text>(S)-methylmalonyl-CoA + pyruvate = propanoyl-CoA + oxaloacetate</text>
        <dbReference type="Rhea" id="RHEA:20764"/>
        <dbReference type="ChEBI" id="CHEBI:15361"/>
        <dbReference type="ChEBI" id="CHEBI:16452"/>
        <dbReference type="ChEBI" id="CHEBI:57327"/>
        <dbReference type="ChEBI" id="CHEBI:57392"/>
        <dbReference type="EC" id="2.1.3.1"/>
    </reaction>
</comment>
<comment type="cofactor">
    <cofactor>
        <name>Co(2+)</name>
        <dbReference type="ChEBI" id="CHEBI:48828"/>
    </cofactor>
    <text>Binds 1 Co(2+) ion per subunit.</text>
</comment>
<comment type="subunit">
    <text evidence="2">Homodimer. Transcarboxylase is composed of three subunits: 1.3S, 5S, and 12S. The core of the enzyme is composed of six 12S subunits. On each side of the core there are three pairs of 5S subunits. Each 5S dimer is attached to the core by two 1.3S subunits. Thus the total number of chains is 30 (6 + 12 + 12).</text>
</comment>
<comment type="PTM">
    <text evidence="2">Lys-184 is carboxylated in the free enzyme and helps to coordinate the cobalt ion. Lys-184 is partially carboxylated in the complex with pyruvate, but is not carboxylated in the oxaloacetate-bound form.</text>
</comment>
<comment type="sequence caution" evidence="3">
    <conflict type="frameshift">
        <sequence resource="EMBL-CDS" id="AAA03174"/>
    </conflict>
</comment>
<name>5S_PROFR</name>
<feature type="chain" id="PRO_0000146816" description="Methylmalonyl-CoA carboxyltransferase 5S subunit">
    <location>
        <begin position="1"/>
        <end position="505"/>
    </location>
</feature>
<feature type="domain" description="Pyruvate carboxyltransferase" evidence="1">
    <location>
        <begin position="14"/>
        <end position="276"/>
    </location>
</feature>
<feature type="binding site">
    <location>
        <begin position="22"/>
        <end position="26"/>
    </location>
    <ligand>
        <name>substrate</name>
    </ligand>
</feature>
<feature type="binding site">
    <location>
        <position position="23"/>
    </location>
    <ligand>
        <name>Co(2+)</name>
        <dbReference type="ChEBI" id="CHEBI:48828"/>
    </ligand>
</feature>
<feature type="binding site">
    <location>
        <position position="59"/>
    </location>
    <ligand>
        <name>substrate</name>
    </ligand>
</feature>
<feature type="binding site">
    <location>
        <position position="184"/>
    </location>
    <ligand>
        <name>Co(2+)</name>
        <dbReference type="ChEBI" id="CHEBI:48828"/>
    </ligand>
</feature>
<feature type="binding site">
    <location>
        <position position="184"/>
    </location>
    <ligand>
        <name>substrate</name>
    </ligand>
</feature>
<feature type="binding site">
    <location>
        <position position="215"/>
    </location>
    <ligand>
        <name>Co(2+)</name>
        <dbReference type="ChEBI" id="CHEBI:48828"/>
    </ligand>
</feature>
<feature type="binding site">
    <location>
        <position position="217"/>
    </location>
    <ligand>
        <name>Co(2+)</name>
        <dbReference type="ChEBI" id="CHEBI:48828"/>
    </ligand>
</feature>
<feature type="modified residue" description="N6-carboxylysine; partial" evidence="2">
    <location>
        <position position="184"/>
    </location>
</feature>
<feature type="mutagenesis site" description="Decreases activity by 96%." evidence="2">
    <original>A</original>
    <variation>T</variation>
    <location>
        <position position="59"/>
    </location>
</feature>
<feature type="mutagenesis site" description="Loss of activity." evidence="2">
    <original>K</original>
    <variation>A</variation>
    <variation>E</variation>
    <location>
        <position position="184"/>
    </location>
</feature>
<feature type="mutagenesis site" description="Decreases activity by 98%." evidence="2">
    <original>M</original>
    <variation>I</variation>
    <location>
        <position position="186"/>
    </location>
</feature>
<feature type="sequence conflict" description="In Ref. 1; AAA03174." evidence="3" ref="1">
    <original>A</original>
    <variation>AG</variation>
    <location>
        <position position="341"/>
    </location>
</feature>
<feature type="sequence conflict" description="In Ref. 1; AAA03174." evidence="3" ref="1">
    <original>S</original>
    <variation>T</variation>
    <location>
        <position position="386"/>
    </location>
</feature>
<feature type="sequence conflict" description="In Ref. 1; AAA03174." evidence="3" ref="1">
    <original>R</original>
    <variation>RDPKWSVGEEHRRAITQRPADH</variation>
    <location>
        <position position="390"/>
    </location>
</feature>
<feature type="sequence conflict" description="In Ref. 1; AAA03174." evidence="3" ref="1">
    <original>K</original>
    <variation>E</variation>
    <location>
        <position position="421"/>
    </location>
</feature>
<feature type="sequence conflict" description="In Ref. 1; AAA03174." evidence="3" ref="1">
    <original>L</original>
    <variation>P</variation>
    <location>
        <position position="429"/>
    </location>
</feature>
<feature type="sequence conflict" description="In Ref. 1; AAA03174." evidence="3" ref="1">
    <original>H</original>
    <variation>S</variation>
    <location>
        <position position="455"/>
    </location>
</feature>
<feature type="sequence conflict" description="In Ref. 1; AAA03174." evidence="3" ref="1">
    <original>H</original>
    <variation>Q</variation>
    <location>
        <position position="461"/>
    </location>
</feature>
<feature type="sequence conflict" description="In Ref. 1; AAA03174." evidence="3" ref="1">
    <original>L</original>
    <variation>V</variation>
    <location>
        <position position="481"/>
    </location>
</feature>
<feature type="strand" evidence="4">
    <location>
        <begin position="11"/>
        <end position="13"/>
    </location>
</feature>
<feature type="strand" evidence="4">
    <location>
        <begin position="15"/>
        <end position="18"/>
    </location>
</feature>
<feature type="turn" evidence="4">
    <location>
        <begin position="20"/>
        <end position="22"/>
    </location>
</feature>
<feature type="helix" evidence="4">
    <location>
        <begin position="23"/>
        <end position="28"/>
    </location>
</feature>
<feature type="helix" evidence="4">
    <location>
        <begin position="35"/>
        <end position="37"/>
    </location>
</feature>
<feature type="helix" evidence="4">
    <location>
        <begin position="39"/>
        <end position="41"/>
    </location>
</feature>
<feature type="helix" evidence="4">
    <location>
        <begin position="42"/>
        <end position="47"/>
    </location>
</feature>
<feature type="strand" evidence="4">
    <location>
        <begin position="51"/>
        <end position="57"/>
    </location>
</feature>
<feature type="helix" evidence="4">
    <location>
        <begin position="60"/>
        <end position="66"/>
    </location>
</feature>
<feature type="helix" evidence="4">
    <location>
        <begin position="72"/>
        <end position="82"/>
    </location>
</feature>
<feature type="strand" evidence="4">
    <location>
        <begin position="88"/>
        <end position="92"/>
    </location>
</feature>
<feature type="helix" evidence="4">
    <location>
        <begin position="94"/>
        <end position="96"/>
    </location>
</feature>
<feature type="strand" evidence="4">
    <location>
        <begin position="99"/>
        <end position="101"/>
    </location>
</feature>
<feature type="helix" evidence="4">
    <location>
        <begin position="105"/>
        <end position="117"/>
    </location>
</feature>
<feature type="strand" evidence="4">
    <location>
        <begin position="122"/>
        <end position="125"/>
    </location>
</feature>
<feature type="helix" evidence="4">
    <location>
        <begin position="133"/>
        <end position="144"/>
    </location>
</feature>
<feature type="strand" evidence="4">
    <location>
        <begin position="148"/>
        <end position="154"/>
    </location>
</feature>
<feature type="helix" evidence="4">
    <location>
        <begin position="163"/>
        <end position="175"/>
    </location>
</feature>
<feature type="strand" evidence="4">
    <location>
        <begin position="179"/>
        <end position="185"/>
    </location>
</feature>
<feature type="helix" evidence="4">
    <location>
        <begin position="192"/>
        <end position="206"/>
    </location>
</feature>
<feature type="strand" evidence="4">
    <location>
        <begin position="212"/>
        <end position="217"/>
    </location>
</feature>
<feature type="strand" evidence="6">
    <location>
        <begin position="219"/>
        <end position="221"/>
    </location>
</feature>
<feature type="helix" evidence="4">
    <location>
        <begin position="223"/>
        <end position="232"/>
    </location>
</feature>
<feature type="strand" evidence="4">
    <location>
        <begin position="236"/>
        <end position="241"/>
    </location>
</feature>
<feature type="helix" evidence="4">
    <location>
        <begin position="243"/>
        <end position="245"/>
    </location>
</feature>
<feature type="helix" evidence="4">
    <location>
        <begin position="254"/>
        <end position="260"/>
    </location>
</feature>
<feature type="turn" evidence="4">
    <location>
        <begin position="261"/>
        <end position="263"/>
    </location>
</feature>
<feature type="strand" evidence="4">
    <location>
        <begin position="264"/>
        <end position="267"/>
    </location>
</feature>
<feature type="helix" evidence="4">
    <location>
        <begin position="272"/>
        <end position="285"/>
    </location>
</feature>
<feature type="helix" evidence="4">
    <location>
        <begin position="286"/>
        <end position="292"/>
    </location>
</feature>
<feature type="helix" evidence="4">
    <location>
        <begin position="302"/>
        <end position="305"/>
    </location>
</feature>
<feature type="helix" evidence="4">
    <location>
        <begin position="309"/>
        <end position="320"/>
    </location>
</feature>
<feature type="turn" evidence="6">
    <location>
        <begin position="325"/>
        <end position="327"/>
    </location>
</feature>
<feature type="helix" evidence="4">
    <location>
        <begin position="328"/>
        <end position="341"/>
    </location>
</feature>
<feature type="helix" evidence="4">
    <location>
        <begin position="351"/>
        <end position="365"/>
    </location>
</feature>
<feature type="turn" evidence="5">
    <location>
        <begin position="367"/>
        <end position="369"/>
    </location>
</feature>
<feature type="helix" evidence="4">
    <location>
        <begin position="373"/>
        <end position="379"/>
    </location>
</feature>
<feature type="turn" evidence="4">
    <location>
        <begin position="380"/>
        <end position="383"/>
    </location>
</feature>
<feature type="helix" evidence="4">
    <location>
        <begin position="392"/>
        <end position="402"/>
    </location>
</feature>
<feature type="helix" evidence="4">
    <location>
        <begin position="411"/>
        <end position="414"/>
    </location>
</feature>
<feature type="helix" evidence="4">
    <location>
        <begin position="419"/>
        <end position="426"/>
    </location>
</feature>
<feature type="helix" evidence="4">
    <location>
        <begin position="436"/>
        <end position="444"/>
    </location>
</feature>
<feature type="turn" evidence="4">
    <location>
        <begin position="446"/>
        <end position="448"/>
    </location>
</feature>
<feature type="helix" evidence="4">
    <location>
        <begin position="449"/>
        <end position="455"/>
    </location>
</feature>
<feature type="helix" evidence="4">
    <location>
        <begin position="456"/>
        <end position="458"/>
    </location>
</feature>
<feature type="helix" evidence="4">
    <location>
        <begin position="467"/>
        <end position="473"/>
    </location>
</feature>
<reference key="1">
    <citation type="journal article" date="1993" name="FEBS Lett.">
        <title>Primary structure of the 5 S subunit of transcarboxylase as deduced from the genomic DNA sequence.</title>
        <authorList>
            <person name="Thornton C.G."/>
            <person name="Kumar G.K."/>
            <person name="Shenoy B.C."/>
            <person name="Haase F.C."/>
            <person name="Phillips N.F.B."/>
            <person name="Park V.M."/>
            <person name="Magner W.J."/>
            <person name="Hejlik D.P."/>
            <person name="Wood H.G."/>
            <person name="Samols D."/>
        </authorList>
    </citation>
    <scope>NUCLEOTIDE SEQUENCE [GENOMIC DNA]</scope>
    <scope>PROTEIN SEQUENCE OF 3-22; 67-76; 88-92; 111-124; 134-147; 305-316; 325-337; 371-393; 397-410 AND 431-456</scope>
    <source>
        <strain>St33</strain>
    </source>
</reference>
<reference key="2">
    <citation type="journal article" date="2004" name="Acta Crystallogr. D">
        <title>Expression and crystallization of several forms of the Propionibacterium shermanii transcarboxylase 5S subunit.</title>
        <authorList>
            <person name="Hall P.R."/>
            <person name="Zheng R."/>
            <person name="Pusztai-Carey M."/>
            <person name="van den Akker F."/>
            <person name="Carey P.R."/>
            <person name="Yee V.C."/>
        </authorList>
    </citation>
    <scope>NUCLEOTIDE SEQUENCE [GENOMIC DNA]</scope>
    <source>
        <strain>ATCC 13673 / NCIMB 10585 / NRRL B-4327 / VPI 409 / 33</strain>
    </source>
</reference>
<reference key="3">
    <citation type="journal article" date="2004" name="EMBO J.">
        <title>Transcarboxylase 5S structures: assembly and catalytic mechanism of a multienzyme complex subunit.</title>
        <authorList>
            <person name="Hall P.R."/>
            <person name="Zheng R."/>
            <person name="Antony L."/>
            <person name="Pusztai-Carey M."/>
            <person name="Carey P.R."/>
            <person name="Yee V.C."/>
        </authorList>
    </citation>
    <scope>X-RAY CRYSTALLOGRAPHY (1.9 ANGSTROMS) IN COMPLEXES WITH SUBSTRATE; PRODUCT AND COBALT IONS</scope>
    <scope>SUBUNIT</scope>
    <scope>CARBOXYLATION AT LYS-184</scope>
    <scope>MUTAGENESIS OF ALA-59; LYS-184 AND MET-186</scope>
</reference>
<dbReference type="EC" id="2.1.3.1"/>
<dbReference type="EMBL" id="L06488">
    <property type="protein sequence ID" value="AAA03174.1"/>
    <property type="status" value="ALT_FRAME"/>
    <property type="molecule type" value="Unassigned_DNA"/>
</dbReference>
<dbReference type="EMBL" id="AJ606310">
    <property type="protein sequence ID" value="CAE54442.1"/>
    <property type="molecule type" value="Genomic_DNA"/>
</dbReference>
<dbReference type="PIR" id="S36808">
    <property type="entry name" value="S36808"/>
</dbReference>
<dbReference type="PDB" id="1RQB">
    <property type="method" value="X-ray"/>
    <property type="resolution" value="1.90 A"/>
    <property type="chains" value="A=2-505"/>
</dbReference>
<dbReference type="PDB" id="1RQE">
    <property type="method" value="X-ray"/>
    <property type="resolution" value="2.50 A"/>
    <property type="chains" value="A=2-505"/>
</dbReference>
<dbReference type="PDB" id="1RQH">
    <property type="method" value="X-ray"/>
    <property type="resolution" value="2.00 A"/>
    <property type="chains" value="A=2-505"/>
</dbReference>
<dbReference type="PDB" id="1RR2">
    <property type="method" value="X-ray"/>
    <property type="resolution" value="2.00 A"/>
    <property type="chains" value="A=2-505"/>
</dbReference>
<dbReference type="PDB" id="1S3H">
    <property type="method" value="X-ray"/>
    <property type="resolution" value="2.50 A"/>
    <property type="chains" value="A=2-505"/>
</dbReference>
<dbReference type="PDB" id="1U5J">
    <property type="method" value="X-ray"/>
    <property type="resolution" value="2.80 A"/>
    <property type="chains" value="A=2-505"/>
</dbReference>
<dbReference type="PDBsum" id="1RQB"/>
<dbReference type="PDBsum" id="1RQE"/>
<dbReference type="PDBsum" id="1RQH"/>
<dbReference type="PDBsum" id="1RR2"/>
<dbReference type="PDBsum" id="1S3H"/>
<dbReference type="PDBsum" id="1U5J"/>
<dbReference type="SMR" id="Q70AC7"/>
<dbReference type="DrugBank" id="DB04553">
    <property type="generic name" value="2-Oxobutanoic Acid"/>
</dbReference>
<dbReference type="DrugBank" id="DB03801">
    <property type="generic name" value="Lysine Nz-Carboxylic Acid"/>
</dbReference>
<dbReference type="DrugBank" id="DB02637">
    <property type="generic name" value="Oxaloacetate Ion"/>
</dbReference>
<dbReference type="BioCyc" id="MetaCyc:MONOMER-12430"/>
<dbReference type="BRENDA" id="2.1.3.1">
    <property type="organism ID" value="5032"/>
</dbReference>
<dbReference type="EvolutionaryTrace" id="Q70AC7"/>
<dbReference type="GO" id="GO:0005737">
    <property type="term" value="C:cytoplasm"/>
    <property type="evidence" value="ECO:0007669"/>
    <property type="project" value="TreeGrafter"/>
</dbReference>
<dbReference type="GO" id="GO:0046872">
    <property type="term" value="F:metal ion binding"/>
    <property type="evidence" value="ECO:0007669"/>
    <property type="project" value="UniProtKB-KW"/>
</dbReference>
<dbReference type="GO" id="GO:0047154">
    <property type="term" value="F:methylmalonyl-CoA carboxytransferase activity"/>
    <property type="evidence" value="ECO:0007669"/>
    <property type="project" value="UniProtKB-EC"/>
</dbReference>
<dbReference type="GO" id="GO:0004736">
    <property type="term" value="F:pyruvate carboxylase activity"/>
    <property type="evidence" value="ECO:0007669"/>
    <property type="project" value="TreeGrafter"/>
</dbReference>
<dbReference type="GO" id="GO:0006094">
    <property type="term" value="P:gluconeogenesis"/>
    <property type="evidence" value="ECO:0007669"/>
    <property type="project" value="TreeGrafter"/>
</dbReference>
<dbReference type="CDD" id="cd07937">
    <property type="entry name" value="DRE_TIM_PC_TC_5S"/>
    <property type="match status" value="1"/>
</dbReference>
<dbReference type="Gene3D" id="3.20.20.70">
    <property type="entry name" value="Aldolase class I"/>
    <property type="match status" value="1"/>
</dbReference>
<dbReference type="InterPro" id="IPR013785">
    <property type="entry name" value="Aldolase_TIM"/>
</dbReference>
<dbReference type="InterPro" id="IPR003379">
    <property type="entry name" value="Carboxylase_cons_dom"/>
</dbReference>
<dbReference type="InterPro" id="IPR055268">
    <property type="entry name" value="PCB-like"/>
</dbReference>
<dbReference type="InterPro" id="IPR000891">
    <property type="entry name" value="PYR_CT"/>
</dbReference>
<dbReference type="NCBIfam" id="NF006761">
    <property type="entry name" value="PRK09282.1"/>
    <property type="match status" value="1"/>
</dbReference>
<dbReference type="NCBIfam" id="NF008984">
    <property type="entry name" value="PRK12330.1"/>
    <property type="match status" value="1"/>
</dbReference>
<dbReference type="PANTHER" id="PTHR43778">
    <property type="entry name" value="PYRUVATE CARBOXYLASE"/>
    <property type="match status" value="1"/>
</dbReference>
<dbReference type="PANTHER" id="PTHR43778:SF2">
    <property type="entry name" value="PYRUVATE CARBOXYLASE, MITOCHONDRIAL"/>
    <property type="match status" value="1"/>
</dbReference>
<dbReference type="Pfam" id="PF00682">
    <property type="entry name" value="HMGL-like"/>
    <property type="match status" value="1"/>
</dbReference>
<dbReference type="Pfam" id="PF02436">
    <property type="entry name" value="PYC_OADA"/>
    <property type="match status" value="1"/>
</dbReference>
<dbReference type="SUPFAM" id="SSF51569">
    <property type="entry name" value="Aldolase"/>
    <property type="match status" value="1"/>
</dbReference>
<dbReference type="SUPFAM" id="SSF89000">
    <property type="entry name" value="post-HMGL domain-like"/>
    <property type="match status" value="1"/>
</dbReference>
<dbReference type="PROSITE" id="PS50991">
    <property type="entry name" value="PYR_CT"/>
    <property type="match status" value="1"/>
</dbReference>
<organism>
    <name type="scientific">Propionibacterium freudenreichii subsp. shermanii</name>
    <dbReference type="NCBI Taxonomy" id="1752"/>
    <lineage>
        <taxon>Bacteria</taxon>
        <taxon>Bacillati</taxon>
        <taxon>Actinomycetota</taxon>
        <taxon>Actinomycetes</taxon>
        <taxon>Propionibacteriales</taxon>
        <taxon>Propionibacteriaceae</taxon>
        <taxon>Propionibacterium</taxon>
    </lineage>
</organism>
<proteinExistence type="evidence at protein level"/>
<evidence type="ECO:0000255" key="1">
    <source>
        <dbReference type="PROSITE-ProRule" id="PRU01151"/>
    </source>
</evidence>
<evidence type="ECO:0000269" key="2">
    <source>
    </source>
</evidence>
<evidence type="ECO:0000305" key="3"/>
<evidence type="ECO:0007829" key="4">
    <source>
        <dbReference type="PDB" id="1RQB"/>
    </source>
</evidence>
<evidence type="ECO:0007829" key="5">
    <source>
        <dbReference type="PDB" id="1S3H"/>
    </source>
</evidence>
<evidence type="ECO:0007829" key="6">
    <source>
        <dbReference type="PDB" id="1U5J"/>
    </source>
</evidence>
<accession>Q70AC7</accession>
<accession>Q05618</accession>
<sequence length="505" mass="55649">MSPREIEVSEPREVGITELVLRDAHQSLMATRMAMEDMVGACADIDAAGYWSVECWGGATYDSCIRFLNEDPWERLRTFRKLMPNSRLQMLLRGQNLLGYRHYNDEVVDRFVDKSAENGMDVFRVFDAMNDPRNMAHAMAAVKKAGKHAQGTICYTISPVHTVEGYVKLAGQLLDMGADSIALKDMAALLKPQPAYDIIKAIKDTYGQKTQINLHCHSTTGVTEVSLMKAIEAGVDVVDTAISSMSLGPGHNPTESVAEMLEGTGYTTNLDYDRLHKIRDHFKAIRPKYKKFESKTLVDTSIFKSQIPGGMLSNMESQLRAQGAEDKMDEVMAEVPRVRKAAGFPPLVTPSSQIVGTQAVFNVMMGEYKRMTGEFADIMLGYYGASPADRDPKVVKLAEEQSGKKPITQRPADLLPPEWEKQSKEAATLKGFNGTDEDVLTYALFPQVAPVFFEHRAEGPHSVALTDAQLKAEAEGDEKSLAVAGPVTYNVNVGGTVREVTVQQA</sequence>
<protein>
    <recommendedName>
        <fullName>Methylmalonyl-CoA carboxyltransferase 5S subunit</fullName>
        <ecNumber>2.1.3.1</ecNumber>
    </recommendedName>
    <alternativeName>
        <fullName>Transcarboxylase 5S subunit</fullName>
    </alternativeName>
</protein>
<keyword id="KW-0002">3D-structure</keyword>
<keyword id="KW-0170">Cobalt</keyword>
<keyword id="KW-0903">Direct protein sequencing</keyword>
<keyword id="KW-0479">Metal-binding</keyword>
<keyword id="KW-0808">Transferase</keyword>